<dbReference type="EC" id="2.7.1.232" evidence="1 2 4"/>
<dbReference type="EMBL" id="EU751287">
    <property type="protein sequence ID" value="ACE79748.1"/>
    <property type="molecule type" value="mRNA"/>
</dbReference>
<dbReference type="PDB" id="4YH5">
    <property type="method" value="X-ray"/>
    <property type="resolution" value="1.90 A"/>
    <property type="chains" value="A/B=1-439"/>
</dbReference>
<dbReference type="PDB" id="4ZFV">
    <property type="method" value="X-ray"/>
    <property type="resolution" value="1.50 A"/>
    <property type="chains" value="A/B=1-439"/>
</dbReference>
<dbReference type="PDB" id="4ZLU">
    <property type="method" value="X-ray"/>
    <property type="resolution" value="1.80 A"/>
    <property type="chains" value="A/B=1-439"/>
</dbReference>
<dbReference type="PDB" id="5BSB">
    <property type="method" value="X-ray"/>
    <property type="resolution" value="1.85 A"/>
    <property type="chains" value="A=1-439"/>
</dbReference>
<dbReference type="PDB" id="5BVC">
    <property type="method" value="X-ray"/>
    <property type="resolution" value="2.00 A"/>
    <property type="chains" value="A=1-439"/>
</dbReference>
<dbReference type="PDB" id="5TKR">
    <property type="method" value="X-ray"/>
    <property type="resolution" value="1.80 A"/>
    <property type="chains" value="A=1-439"/>
</dbReference>
<dbReference type="PDBsum" id="4YH5"/>
<dbReference type="PDBsum" id="4ZFV"/>
<dbReference type="PDBsum" id="4ZLU"/>
<dbReference type="PDBsum" id="5BSB"/>
<dbReference type="PDBsum" id="5BVC"/>
<dbReference type="PDBsum" id="5TKR"/>
<dbReference type="SMR" id="B3VI55"/>
<dbReference type="KEGG" id="ag:ACE79748"/>
<dbReference type="BioCyc" id="MetaCyc:MONOMER-21029"/>
<dbReference type="BRENDA" id="2.7.1.232">
    <property type="organism ID" value="3042"/>
</dbReference>
<dbReference type="EvolutionaryTrace" id="B3VI55"/>
<dbReference type="GO" id="GO:0005524">
    <property type="term" value="F:ATP binding"/>
    <property type="evidence" value="ECO:0007669"/>
    <property type="project" value="InterPro"/>
</dbReference>
<dbReference type="GO" id="GO:0016301">
    <property type="term" value="F:kinase activity"/>
    <property type="evidence" value="ECO:0007669"/>
    <property type="project" value="UniProtKB-KW"/>
</dbReference>
<dbReference type="GO" id="GO:0046872">
    <property type="term" value="F:metal ion binding"/>
    <property type="evidence" value="ECO:0007669"/>
    <property type="project" value="UniProtKB-KW"/>
</dbReference>
<dbReference type="GO" id="GO:0016773">
    <property type="term" value="F:phosphotransferase activity, alcohol group as acceptor"/>
    <property type="evidence" value="ECO:0007669"/>
    <property type="project" value="InterPro"/>
</dbReference>
<dbReference type="GO" id="GO:0006040">
    <property type="term" value="P:amino sugar metabolic process"/>
    <property type="evidence" value="ECO:0007669"/>
    <property type="project" value="InterPro"/>
</dbReference>
<dbReference type="GO" id="GO:0009254">
    <property type="term" value="P:peptidoglycan turnover"/>
    <property type="evidence" value="ECO:0007669"/>
    <property type="project" value="InterPro"/>
</dbReference>
<dbReference type="CDD" id="cd24051">
    <property type="entry name" value="ASKHA_NBD_LGK"/>
    <property type="match status" value="1"/>
</dbReference>
<dbReference type="Gene3D" id="3.30.420.40">
    <property type="match status" value="2"/>
</dbReference>
<dbReference type="InterPro" id="IPR005338">
    <property type="entry name" value="Anhydro_N_Ac-Mur_kinase"/>
</dbReference>
<dbReference type="InterPro" id="IPR043129">
    <property type="entry name" value="ATPase_NBD"/>
</dbReference>
<dbReference type="PANTHER" id="PTHR30605">
    <property type="entry name" value="ANHYDRO-N-ACETYLMURAMIC ACID KINASE"/>
    <property type="match status" value="1"/>
</dbReference>
<dbReference type="PANTHER" id="PTHR30605:SF0">
    <property type="entry name" value="ANHYDRO-N-ACETYLMURAMIC ACID KINASE"/>
    <property type="match status" value="1"/>
</dbReference>
<dbReference type="Pfam" id="PF03702">
    <property type="entry name" value="AnmK"/>
    <property type="match status" value="1"/>
</dbReference>
<dbReference type="SUPFAM" id="SSF53067">
    <property type="entry name" value="Actin-like ATPase domain"/>
    <property type="match status" value="1"/>
</dbReference>
<evidence type="ECO:0000269" key="1">
    <source>
    </source>
</evidence>
<evidence type="ECO:0000269" key="2">
    <source>
    </source>
</evidence>
<evidence type="ECO:0000269" key="3">
    <source>
    </source>
</evidence>
<evidence type="ECO:0000269" key="4">
    <source ref="1"/>
</evidence>
<evidence type="ECO:0000303" key="5">
    <source ref="1"/>
</evidence>
<evidence type="ECO:0000305" key="6"/>
<evidence type="ECO:0007744" key="7">
    <source>
        <dbReference type="PDB" id="4YH5"/>
    </source>
</evidence>
<evidence type="ECO:0007744" key="8">
    <source>
        <dbReference type="PDB" id="4ZFV"/>
    </source>
</evidence>
<evidence type="ECO:0007744" key="9">
    <source>
        <dbReference type="PDB" id="4ZLU"/>
    </source>
</evidence>
<evidence type="ECO:0007744" key="10">
    <source>
        <dbReference type="PDB" id="5BSB"/>
    </source>
</evidence>
<evidence type="ECO:0007744" key="11">
    <source>
        <dbReference type="PDB" id="5BVC"/>
    </source>
</evidence>
<evidence type="ECO:0007744" key="12">
    <source>
        <dbReference type="PDB" id="5TKR"/>
    </source>
</evidence>
<evidence type="ECO:0007829" key="13">
    <source>
        <dbReference type="PDB" id="4ZFV"/>
    </source>
</evidence>
<organism>
    <name type="scientific">Lipomyces starkeyi</name>
    <name type="common">Oleaginous yeast</name>
    <dbReference type="NCBI Taxonomy" id="29829"/>
    <lineage>
        <taxon>Eukaryota</taxon>
        <taxon>Fungi</taxon>
        <taxon>Dikarya</taxon>
        <taxon>Ascomycota</taxon>
        <taxon>Saccharomycotina</taxon>
        <taxon>Lipomycetes</taxon>
        <taxon>Lipomycetales</taxon>
        <taxon>Lipomycetaceae</taxon>
        <taxon>Lipomyces</taxon>
    </lineage>
</organism>
<comment type="function">
    <text evidence="1 2 4">Levoglucosan kinase that catalyzes the transfer of a phosphate group from ATP to levoglucosan (1,6-anhydro-beta-D-glucopyranose, LG) to yield glucose 6-phosphate in the presence of magnesium ion and ATP (PubMed:21719279, PubMed:26354439, Ref.1). In addition to the canonical kinase phosphotransfer reaction, the conversion requires cleavage of the 1,6-anhydro ring to allow ATP-dependent phosphorylation of the sugar O-6 atom (PubMed:21719279, PubMed:26354439, Ref.1).</text>
</comment>
<comment type="catalytic activity">
    <reaction evidence="1 2 4">
        <text>levoglucosan + ATP + H2O = D-glucose 6-phosphate + ADP + H(+)</text>
        <dbReference type="Rhea" id="RHEA:63428"/>
        <dbReference type="ChEBI" id="CHEBI:15377"/>
        <dbReference type="ChEBI" id="CHEBI:15378"/>
        <dbReference type="ChEBI" id="CHEBI:30616"/>
        <dbReference type="ChEBI" id="CHEBI:30997"/>
        <dbReference type="ChEBI" id="CHEBI:61548"/>
        <dbReference type="ChEBI" id="CHEBI:456216"/>
        <dbReference type="EC" id="2.7.1.232"/>
    </reaction>
    <physiologicalReaction direction="left-to-right" evidence="1 2 4">
        <dbReference type="Rhea" id="RHEA:63429"/>
    </physiologicalReaction>
</comment>
<comment type="cofactor">
    <cofactor evidence="2 3">
        <name>Mg(2+)</name>
        <dbReference type="ChEBI" id="CHEBI:18420"/>
    </cofactor>
    <text evidence="2 3">Binds 2 Mg(2+) ions per subunit.</text>
</comment>
<comment type="activity regulation">
    <text evidence="2">Tris(hydroxymethyl)aminomethane (Tris) is a competitive inhibitor of the reaction.</text>
</comment>
<comment type="biophysicochemical properties">
    <kinetics>
        <KM evidence="2 4">105.3 mM for levoglucosan</KM>
        <KM evidence="4">0.2 mM for ATP</KM>
    </kinetics>
    <phDependence>
        <text evidence="4">Optimum pH is 9.0.</text>
    </phDependence>
    <temperatureDependence>
        <text evidence="4">Optimum temperature is 30 degrees Celsius.</text>
    </temperatureDependence>
</comment>
<comment type="subunit">
    <text evidence="2 3">Homodimer.</text>
</comment>
<comment type="biotechnology">
    <text evidence="1">Levoglucosan is the major anhydrosugar compound resulting from the degradation of cellulose during the fast pyrolysis process of biomass and thus the most attractive fermentation substrate in the bio-oil (PubMed:21719279). Engineered E.coli can use levoglucosan as sole carbon source, but it also ferments levoglucosan to ethanol (PubMed:21719279).</text>
</comment>
<comment type="similarity">
    <text evidence="6">Belongs to the anhydro-N-acetylmuramic acid kinase family.</text>
</comment>
<name>LGK_LIPST</name>
<protein>
    <recommendedName>
        <fullName evidence="5">Levoglucosan kinase</fullName>
        <shortName evidence="5">LGK</shortName>
        <ecNumber evidence="1 2 4">2.7.1.232</ecNumber>
    </recommendedName>
</protein>
<reference key="1">
    <citation type="journal article" date="2009" name="World J. Microbiol. Biotechnol.">
        <title>Cloning of a novel levoglucosan kinase gene from Lipomyces starkeyi and its expression in Escherichia coli.</title>
        <authorList>
            <person name="Dai J."/>
            <person name="Yu Z."/>
            <person name="He Y."/>
            <person name="Zhang L."/>
            <person name="Du Y."/>
            <person name="Bai Z."/>
            <person name="Dong Z."/>
            <person name="Zhang H."/>
        </authorList>
        <dbReference type="AGRICOLA" id="IND44243598"/>
    </citation>
    <scope>NUCLEOTIDE SEQUENCE [MRNA]</scope>
    <scope>FUNCTION</scope>
    <scope>CATALYTIC ACTIVITY</scope>
    <scope>BIOPHYSICOCHEMICAL PROPERTIES</scope>
    <source>
        <strain>YZ-215</strain>
    </source>
</reference>
<reference key="2">
    <citation type="journal article" date="2011" name="Bioresour. Technol.">
        <title>Engineering ethanologenic Escherichia coli for levoglucosan utilization.</title>
        <authorList>
            <person name="Layton D.S."/>
            <person name="Ajjarapu A."/>
            <person name="Choi D.W."/>
            <person name="Jarboe L.R."/>
        </authorList>
    </citation>
    <scope>FUNCTION</scope>
    <scope>CATALYTIC ACTIVITY</scope>
    <scope>BIOTECHNOLOGY</scope>
</reference>
<reference evidence="7 8 9 10 11" key="3">
    <citation type="journal article" date="2015" name="J. Biol. Chem.">
        <title>Producing glucose 6-phosphate from cellulosic biomass: structural insights into levoglucosan bioconversion.</title>
        <authorList>
            <person name="Bacik J.P."/>
            <person name="Klesmith J.R."/>
            <person name="Whitehead T.A."/>
            <person name="Jarboe L.R."/>
            <person name="Unkefer C.J."/>
            <person name="Mark B.L."/>
            <person name="Michalczyk R."/>
        </authorList>
    </citation>
    <scope>X-RAY CRYSTALLOGRAPHY (1.50 ANGSTROMS) IN COMPLEX WITH ADP; MAGNESIUM AND LEVOGLUCOSAN</scope>
    <scope>FUNCTION</scope>
    <scope>COFACTOR</scope>
    <scope>CATALYTIC ACTIVITY</scope>
    <scope>BIOPHYSICOCHEMICAL PROPERTIES</scope>
    <scope>SUBUNIT</scope>
    <scope>ACTIVITY REGULATION</scope>
</reference>
<reference evidence="12" key="4">
    <citation type="journal article" date="2017" name="Proc. Natl. Acad. Sci. U.S.A.">
        <title>Trade-offs between enzyme fitness and solubility illuminated by deep mutational scanning.</title>
        <authorList>
            <person name="Klesmith J.R."/>
            <person name="Bacik J.P."/>
            <person name="Wrenbeck E.E."/>
            <person name="Michalczyk R."/>
            <person name="Whitehead T.A."/>
        </authorList>
    </citation>
    <scope>X-RAY CRYSTALLOGRAPHY (1.80 ANGSTROMS) IN COMPLEX WITH ADP AND MAGNESIUM</scope>
    <scope>COFACTOR</scope>
    <scope>SUBUNIT</scope>
    <scope>MUTAGENESIS OF CYS-194</scope>
</reference>
<keyword id="KW-0002">3D-structure</keyword>
<keyword id="KW-0418">Kinase</keyword>
<keyword id="KW-0460">Magnesium</keyword>
<keyword id="KW-0479">Metal-binding</keyword>
<keyword id="KW-0547">Nucleotide-binding</keyword>
<keyword id="KW-0808">Transferase</keyword>
<accession>B3VI55</accession>
<proteinExistence type="evidence at protein level"/>
<feature type="chain" id="PRO_0000455010" description="Levoglucosan kinase">
    <location>
        <begin position="1"/>
        <end position="439"/>
    </location>
</feature>
<feature type="binding site" evidence="2 3 7 8 9 11 12">
    <location>
        <begin position="23"/>
        <end position="26"/>
    </location>
    <ligand>
        <name>ADP</name>
        <dbReference type="ChEBI" id="CHEBI:456216"/>
    </ligand>
</feature>
<feature type="binding site" evidence="2 3 7 8 9 11 12">
    <location>
        <position position="26"/>
    </location>
    <ligand>
        <name>Mg(2+)</name>
        <dbReference type="ChEBI" id="CHEBI:18420"/>
        <label>1</label>
    </ligand>
</feature>
<feature type="binding site" evidence="2 3 7 8 9 11 12">
    <location>
        <position position="189"/>
    </location>
    <ligand>
        <name>ADP</name>
        <dbReference type="ChEBI" id="CHEBI:456216"/>
    </ligand>
</feature>
<feature type="binding site" evidence="2 9 11">
    <location>
        <position position="192"/>
    </location>
    <ligand>
        <name>levoglucosan</name>
        <dbReference type="ChEBI" id="CHEBI:30997"/>
    </ligand>
</feature>
<feature type="binding site" evidence="2 9 10 11">
    <location>
        <position position="212"/>
    </location>
    <ligand>
        <name>levoglucosan</name>
        <dbReference type="ChEBI" id="CHEBI:30997"/>
    </ligand>
</feature>
<feature type="binding site" evidence="9">
    <location>
        <position position="217"/>
    </location>
    <ligand>
        <name>ADP</name>
        <dbReference type="ChEBI" id="CHEBI:456216"/>
    </ligand>
</feature>
<feature type="binding site" evidence="2 3 7 8 9 11 12">
    <location>
        <position position="221"/>
    </location>
    <ligand>
        <name>ADP</name>
        <dbReference type="ChEBI" id="CHEBI:456216"/>
    </ligand>
</feature>
<feature type="binding site" evidence="2 3 7 8 9 11 12">
    <location>
        <begin position="234"/>
        <end position="237"/>
    </location>
    <ligand>
        <name>ADP</name>
        <dbReference type="ChEBI" id="CHEBI:456216"/>
    </ligand>
</feature>
<feature type="binding site" evidence="2 3 7 8 9 11 12">
    <location>
        <position position="328"/>
    </location>
    <ligand>
        <name>ADP</name>
        <dbReference type="ChEBI" id="CHEBI:456216"/>
    </ligand>
</feature>
<feature type="binding site" evidence="2 3 7 8 9 11 12">
    <location>
        <position position="362"/>
    </location>
    <ligand>
        <name>ADP</name>
        <dbReference type="ChEBI" id="CHEBI:456216"/>
    </ligand>
</feature>
<feature type="binding site" evidence="2 3 7 8 9 11 12">
    <location>
        <position position="362"/>
    </location>
    <ligand>
        <name>Mg(2+)</name>
        <dbReference type="ChEBI" id="CHEBI:18420"/>
        <label>2</label>
    </ligand>
</feature>
<feature type="mutagenesis site" description="Leads to low solubility, probably by introducing a potential glycosylation site near the active site that results in a misfolded protein that would be retained in the endoplasmic reticulum." evidence="3">
    <original>C</original>
    <variation>T</variation>
    <location>
        <position position="194"/>
    </location>
</feature>
<feature type="strand" evidence="13">
    <location>
        <begin position="12"/>
        <end position="21"/>
    </location>
</feature>
<feature type="strand" evidence="13">
    <location>
        <begin position="26"/>
        <end position="39"/>
    </location>
</feature>
<feature type="strand" evidence="13">
    <location>
        <begin position="44"/>
        <end position="55"/>
    </location>
</feature>
<feature type="helix" evidence="13">
    <location>
        <begin position="58"/>
        <end position="70"/>
    </location>
</feature>
<feature type="helix" evidence="13">
    <location>
        <begin position="75"/>
        <end position="99"/>
    </location>
</feature>
<feature type="helix" evidence="13">
    <location>
        <begin position="104"/>
        <end position="106"/>
    </location>
</feature>
<feature type="strand" evidence="13">
    <location>
        <begin position="109"/>
        <end position="120"/>
    </location>
</feature>
<feature type="strand" evidence="13">
    <location>
        <begin position="130"/>
        <end position="135"/>
    </location>
</feature>
<feature type="helix" evidence="13">
    <location>
        <begin position="137"/>
        <end position="144"/>
    </location>
</feature>
<feature type="strand" evidence="13">
    <location>
        <begin position="148"/>
        <end position="150"/>
    </location>
</feature>
<feature type="helix" evidence="13">
    <location>
        <begin position="152"/>
        <end position="158"/>
    </location>
</feature>
<feature type="helix" evidence="13">
    <location>
        <begin position="168"/>
        <end position="175"/>
    </location>
</feature>
<feature type="strand" evidence="13">
    <location>
        <begin position="182"/>
        <end position="196"/>
    </location>
</feature>
<feature type="strand" evidence="13">
    <location>
        <begin position="209"/>
        <end position="217"/>
    </location>
</feature>
<feature type="helix" evidence="13">
    <location>
        <begin position="218"/>
        <end position="227"/>
    </location>
</feature>
<feature type="turn" evidence="13">
    <location>
        <begin position="228"/>
        <end position="230"/>
    </location>
</feature>
<feature type="helix" evidence="13">
    <location>
        <begin position="236"/>
        <end position="238"/>
    </location>
</feature>
<feature type="helix" evidence="13">
    <location>
        <begin position="239"/>
        <end position="243"/>
    </location>
</feature>
<feature type="helix" evidence="13">
    <location>
        <begin position="248"/>
        <end position="254"/>
    </location>
</feature>
<feature type="helix" evidence="13">
    <location>
        <begin position="258"/>
        <end position="261"/>
    </location>
</feature>
<feature type="turn" evidence="13">
    <location>
        <begin position="270"/>
        <end position="272"/>
    </location>
</feature>
<feature type="helix" evidence="13">
    <location>
        <begin position="275"/>
        <end position="288"/>
    </location>
</feature>
<feature type="helix" evidence="13">
    <location>
        <begin position="292"/>
        <end position="314"/>
    </location>
</feature>
<feature type="strand" evidence="13">
    <location>
        <begin position="322"/>
        <end position="327"/>
    </location>
</feature>
<feature type="helix" evidence="13">
    <location>
        <begin position="328"/>
        <end position="331"/>
    </location>
</feature>
<feature type="helix" evidence="13">
    <location>
        <begin position="333"/>
        <end position="342"/>
    </location>
</feature>
<feature type="strand" evidence="13">
    <location>
        <begin position="346"/>
        <end position="350"/>
    </location>
</feature>
<feature type="helix" evidence="13">
    <location>
        <begin position="351"/>
        <end position="354"/>
    </location>
</feature>
<feature type="helix" evidence="13">
    <location>
        <begin position="358"/>
        <end position="360"/>
    </location>
</feature>
<feature type="helix" evidence="13">
    <location>
        <begin position="361"/>
        <end position="375"/>
    </location>
</feature>
<feature type="strand" evidence="13">
    <location>
        <begin position="383"/>
        <end position="386"/>
    </location>
</feature>
<feature type="strand" evidence="13">
    <location>
        <begin position="394"/>
        <end position="397"/>
    </location>
</feature>
<feature type="helix" evidence="13">
    <location>
        <begin position="402"/>
        <end position="411"/>
    </location>
</feature>
<feature type="turn" evidence="13">
    <location>
        <begin position="412"/>
        <end position="415"/>
    </location>
</feature>
<feature type="strand" evidence="13">
    <location>
        <begin position="425"/>
        <end position="429"/>
    </location>
</feature>
<feature type="strand" evidence="13">
    <location>
        <begin position="432"/>
        <end position="434"/>
    </location>
</feature>
<sequence length="439" mass="48372">MPIATSTGDNVLDFTVLGLNSGTSMDGIDCALCHFYQKTPDAPMEFELLEYGEVPLAQPIKQRVMRMILEDTTSPSELSEVNVILGEHFADAVRQFAAERNVDLSTIDAIASHGQTIWLLSMPEEGQVKSALTMAEGAILASRTGITSITDFRISDQAAGRQGAPLIAFFDALLLHHPTKLRACQNIGGIANVCFIPPDVDGRRTDEYYDFDTGPGNVFIDAVVRHFTNGEQEYDKDGAMGKRGKVDQELVDDFLKMPYFQLDPPKTTGREVFRDTLAHDLIRRAEAKGLSPDDIVATTTRITAQAIVDHYRRYAPSQEIDEIFMCGGGAYNPNIVEFIQQSYPNTKIMMLDEAGVPAGAKEAITFAWQGMEALVGRSIPVPTRVETRQHYVLGKVSPGLNYRSVMKKGMAFGGDAQQLPWVSEMIVKKKGKVITNNWA</sequence>